<accession>P43822</accession>
<dbReference type="EC" id="6.1.1.14"/>
<dbReference type="EMBL" id="L42023">
    <property type="protein sequence ID" value="AAC22584.1"/>
    <property type="molecule type" value="Genomic_DNA"/>
</dbReference>
<dbReference type="PIR" id="B64103">
    <property type="entry name" value="B64103"/>
</dbReference>
<dbReference type="RefSeq" id="NP_439084.1">
    <property type="nucleotide sequence ID" value="NC_000907.1"/>
</dbReference>
<dbReference type="SMR" id="P43822"/>
<dbReference type="STRING" id="71421.HI_0924"/>
<dbReference type="EnsemblBacteria" id="AAC22584">
    <property type="protein sequence ID" value="AAC22584"/>
    <property type="gene ID" value="HI_0924"/>
</dbReference>
<dbReference type="KEGG" id="hin:HI_0924"/>
<dbReference type="PATRIC" id="fig|71421.8.peg.965"/>
<dbReference type="eggNOG" id="COG0751">
    <property type="taxonomic scope" value="Bacteria"/>
</dbReference>
<dbReference type="HOGENOM" id="CLU_007220_2_2_6"/>
<dbReference type="OrthoDB" id="9775440at2"/>
<dbReference type="PhylomeDB" id="P43822"/>
<dbReference type="BioCyc" id="HINF71421:G1GJ1-964-MONOMER"/>
<dbReference type="Proteomes" id="UP000000579">
    <property type="component" value="Chromosome"/>
</dbReference>
<dbReference type="GO" id="GO:0005829">
    <property type="term" value="C:cytosol"/>
    <property type="evidence" value="ECO:0000318"/>
    <property type="project" value="GO_Central"/>
</dbReference>
<dbReference type="GO" id="GO:0004814">
    <property type="term" value="F:arginine-tRNA ligase activity"/>
    <property type="evidence" value="ECO:0007669"/>
    <property type="project" value="InterPro"/>
</dbReference>
<dbReference type="GO" id="GO:0005524">
    <property type="term" value="F:ATP binding"/>
    <property type="evidence" value="ECO:0007669"/>
    <property type="project" value="UniProtKB-UniRule"/>
</dbReference>
<dbReference type="GO" id="GO:0004820">
    <property type="term" value="F:glycine-tRNA ligase activity"/>
    <property type="evidence" value="ECO:0007669"/>
    <property type="project" value="UniProtKB-UniRule"/>
</dbReference>
<dbReference type="GO" id="GO:0006420">
    <property type="term" value="P:arginyl-tRNA aminoacylation"/>
    <property type="evidence" value="ECO:0007669"/>
    <property type="project" value="InterPro"/>
</dbReference>
<dbReference type="GO" id="GO:0006426">
    <property type="term" value="P:glycyl-tRNA aminoacylation"/>
    <property type="evidence" value="ECO:0007669"/>
    <property type="project" value="UniProtKB-UniRule"/>
</dbReference>
<dbReference type="HAMAP" id="MF_00255">
    <property type="entry name" value="Gly_tRNA_synth_beta"/>
    <property type="match status" value="1"/>
</dbReference>
<dbReference type="InterPro" id="IPR008909">
    <property type="entry name" value="DALR_anticod-bd"/>
</dbReference>
<dbReference type="InterPro" id="IPR015944">
    <property type="entry name" value="Gly-tRNA-synth_bsu"/>
</dbReference>
<dbReference type="InterPro" id="IPR006194">
    <property type="entry name" value="Gly-tRNA-synth_heterodimer"/>
</dbReference>
<dbReference type="NCBIfam" id="TIGR00211">
    <property type="entry name" value="glyS"/>
    <property type="match status" value="1"/>
</dbReference>
<dbReference type="PANTHER" id="PTHR30075:SF2">
    <property type="entry name" value="GLYCINE--TRNA LIGASE, CHLOROPLASTIC_MITOCHONDRIAL 2"/>
    <property type="match status" value="1"/>
</dbReference>
<dbReference type="PANTHER" id="PTHR30075">
    <property type="entry name" value="GLYCYL-TRNA SYNTHETASE"/>
    <property type="match status" value="1"/>
</dbReference>
<dbReference type="Pfam" id="PF05746">
    <property type="entry name" value="DALR_1"/>
    <property type="match status" value="1"/>
</dbReference>
<dbReference type="Pfam" id="PF02092">
    <property type="entry name" value="tRNA_synt_2f"/>
    <property type="match status" value="1"/>
</dbReference>
<dbReference type="PRINTS" id="PR01045">
    <property type="entry name" value="TRNASYNTHGB"/>
</dbReference>
<dbReference type="SMART" id="SM00836">
    <property type="entry name" value="DALR_1"/>
    <property type="match status" value="1"/>
</dbReference>
<dbReference type="SUPFAM" id="SSF109604">
    <property type="entry name" value="HD-domain/PDEase-like"/>
    <property type="match status" value="1"/>
</dbReference>
<dbReference type="PROSITE" id="PS50861">
    <property type="entry name" value="AA_TRNA_LIGASE_II_GLYAB"/>
    <property type="match status" value="1"/>
</dbReference>
<evidence type="ECO:0000250" key="1"/>
<evidence type="ECO:0000305" key="2"/>
<sequence length="688" mass="75613">MTTQNFLVEIGTEELPPKALKTLATSFADNVEAELNQAGLSFDKIEWFAAPRRLAVKVLNLATQQPSKEIEKRGPAVSAAFDAEGKPTKAAEGWARGCGITVEQAERIATDKGEWLIHRAKIEGQPTKNLLNDIVANALAKLPIPKPMRWADKTVQFIRPVHTVTMLLGDELIEGEILGVASARTIRGHRFLGEKEFYIQHADQYPQLLREKGSVVADFNERKAEILAKSQAKATALGGVADIEESLLEEVTSLVEYPNVLAAKFEEHFLAVPAEALVYTMKGDQKYFPIYDKDGKLLPHFIFVSNINPEDPTAIIEGNEKVVRPRLTDAEFFFKTDLKQKLVDRLPRLETVLFQQQLGTLKDKTDRIEQLAGEIAKQIGADEAKAKRAGLLSKCDLMTNMVFEFTDTQGVMGMHYARHDGEDEEVAVALNEQYMPRFAGDELPKSLVASAVALADKFDTLTGIFGIGQAPKGSADPFALRRAALGALRIIVEKNLPLDLEDLVKKSAALFGDKLTNQNVVADVVDFMLGRFRAWYQDEGIAVDVIQAVLARRPTRPADFDARVRAVSHFRTLDSAEALAAANKRVSNILAKAGAAIGEINLTACVEPAEKALAEAVLALRTEVQPLIAQGDYTTVLDKLANLRAPVDSFFDNVMVNAEDPALRQNRLAILNTLQGLFLQVADISVLQ</sequence>
<reference key="1">
    <citation type="journal article" date="1995" name="Science">
        <title>Whole-genome random sequencing and assembly of Haemophilus influenzae Rd.</title>
        <authorList>
            <person name="Fleischmann R.D."/>
            <person name="Adams M.D."/>
            <person name="White O."/>
            <person name="Clayton R.A."/>
            <person name="Kirkness E.F."/>
            <person name="Kerlavage A.R."/>
            <person name="Bult C.J."/>
            <person name="Tomb J.-F."/>
            <person name="Dougherty B.A."/>
            <person name="Merrick J.M."/>
            <person name="McKenney K."/>
            <person name="Sutton G.G."/>
            <person name="FitzHugh W."/>
            <person name="Fields C.A."/>
            <person name="Gocayne J.D."/>
            <person name="Scott J.D."/>
            <person name="Shirley R."/>
            <person name="Liu L.-I."/>
            <person name="Glodek A."/>
            <person name="Kelley J.M."/>
            <person name="Weidman J.F."/>
            <person name="Phillips C.A."/>
            <person name="Spriggs T."/>
            <person name="Hedblom E."/>
            <person name="Cotton M.D."/>
            <person name="Utterback T.R."/>
            <person name="Hanna M.C."/>
            <person name="Nguyen D.T."/>
            <person name="Saudek D.M."/>
            <person name="Brandon R.C."/>
            <person name="Fine L.D."/>
            <person name="Fritchman J.L."/>
            <person name="Fuhrmann J.L."/>
            <person name="Geoghagen N.S.M."/>
            <person name="Gnehm C.L."/>
            <person name="McDonald L.A."/>
            <person name="Small K.V."/>
            <person name="Fraser C.M."/>
            <person name="Smith H.O."/>
            <person name="Venter J.C."/>
        </authorList>
    </citation>
    <scope>NUCLEOTIDE SEQUENCE [LARGE SCALE GENOMIC DNA]</scope>
    <source>
        <strain>ATCC 51907 / DSM 11121 / KW20 / Rd</strain>
    </source>
</reference>
<feature type="chain" id="PRO_0000072904" description="Glycine--tRNA ligase beta subunit">
    <location>
        <begin position="1"/>
        <end position="688"/>
    </location>
</feature>
<gene>
    <name type="primary">glyS</name>
    <name type="ordered locus">HI_0924</name>
</gene>
<protein>
    <recommendedName>
        <fullName>Glycine--tRNA ligase beta subunit</fullName>
        <ecNumber>6.1.1.14</ecNumber>
    </recommendedName>
    <alternativeName>
        <fullName>Glycyl-tRNA synthetase beta subunit</fullName>
        <shortName>GlyRS</shortName>
    </alternativeName>
</protein>
<keyword id="KW-0030">Aminoacyl-tRNA synthetase</keyword>
<keyword id="KW-0067">ATP-binding</keyword>
<keyword id="KW-0963">Cytoplasm</keyword>
<keyword id="KW-0436">Ligase</keyword>
<keyword id="KW-0547">Nucleotide-binding</keyword>
<keyword id="KW-0648">Protein biosynthesis</keyword>
<keyword id="KW-1185">Reference proteome</keyword>
<name>SYGB_HAEIN</name>
<proteinExistence type="inferred from homology"/>
<comment type="catalytic activity">
    <reaction>
        <text>tRNA(Gly) + glycine + ATP = glycyl-tRNA(Gly) + AMP + diphosphate</text>
        <dbReference type="Rhea" id="RHEA:16013"/>
        <dbReference type="Rhea" id="RHEA-COMP:9664"/>
        <dbReference type="Rhea" id="RHEA-COMP:9683"/>
        <dbReference type="ChEBI" id="CHEBI:30616"/>
        <dbReference type="ChEBI" id="CHEBI:33019"/>
        <dbReference type="ChEBI" id="CHEBI:57305"/>
        <dbReference type="ChEBI" id="CHEBI:78442"/>
        <dbReference type="ChEBI" id="CHEBI:78522"/>
        <dbReference type="ChEBI" id="CHEBI:456215"/>
        <dbReference type="EC" id="6.1.1.14"/>
    </reaction>
</comment>
<comment type="subunit">
    <text evidence="1">Tetramer of two alpha and two beta subunits.</text>
</comment>
<comment type="subcellular location">
    <subcellularLocation>
        <location evidence="1">Cytoplasm</location>
    </subcellularLocation>
</comment>
<comment type="similarity">
    <text evidence="2">Belongs to the class-II aminoacyl-tRNA synthetase family.</text>
</comment>
<organism>
    <name type="scientific">Haemophilus influenzae (strain ATCC 51907 / DSM 11121 / KW20 / Rd)</name>
    <dbReference type="NCBI Taxonomy" id="71421"/>
    <lineage>
        <taxon>Bacteria</taxon>
        <taxon>Pseudomonadati</taxon>
        <taxon>Pseudomonadota</taxon>
        <taxon>Gammaproteobacteria</taxon>
        <taxon>Pasteurellales</taxon>
        <taxon>Pasteurellaceae</taxon>
        <taxon>Haemophilus</taxon>
    </lineage>
</organism>